<protein>
    <recommendedName>
        <fullName evidence="1">1-deoxy-D-xylulose-5-phosphate synthase</fullName>
        <ecNumber evidence="1">2.2.1.7</ecNumber>
    </recommendedName>
    <alternativeName>
        <fullName evidence="1">1-deoxyxylulose-5-phosphate synthase</fullName>
        <shortName evidence="1">DXP synthase</shortName>
        <shortName evidence="1">DXPS</shortName>
    </alternativeName>
</protein>
<reference key="1">
    <citation type="journal article" date="2004" name="Proc. Natl. Acad. Sci. U.S.A.">
        <title>The complete genomic sequence of Nocardia farcinica IFM 10152.</title>
        <authorList>
            <person name="Ishikawa J."/>
            <person name="Yamashita A."/>
            <person name="Mikami Y."/>
            <person name="Hoshino Y."/>
            <person name="Kurita H."/>
            <person name="Hotta K."/>
            <person name="Shiba T."/>
            <person name="Hattori M."/>
        </authorList>
    </citation>
    <scope>NUCLEOTIDE SEQUENCE [LARGE SCALE GENOMIC DNA]</scope>
    <source>
        <strain>IFM 10152</strain>
    </source>
</reference>
<proteinExistence type="inferred from homology"/>
<keyword id="KW-0414">Isoprene biosynthesis</keyword>
<keyword id="KW-0460">Magnesium</keyword>
<keyword id="KW-0479">Metal-binding</keyword>
<keyword id="KW-1185">Reference proteome</keyword>
<keyword id="KW-0784">Thiamine biosynthesis</keyword>
<keyword id="KW-0786">Thiamine pyrophosphate</keyword>
<keyword id="KW-0808">Transferase</keyword>
<gene>
    <name evidence="1" type="primary">dxs</name>
    <name type="ordered locus">NFA_37410</name>
</gene>
<accession>Q5YTA2</accession>
<feature type="chain" id="PRO_0000256447" description="1-deoxy-D-xylulose-5-phosphate synthase">
    <location>
        <begin position="1"/>
        <end position="631"/>
    </location>
</feature>
<feature type="binding site" evidence="1">
    <location>
        <position position="73"/>
    </location>
    <ligand>
        <name>thiamine diphosphate</name>
        <dbReference type="ChEBI" id="CHEBI:58937"/>
    </ligand>
</feature>
<feature type="binding site" evidence="1">
    <location>
        <begin position="114"/>
        <end position="116"/>
    </location>
    <ligand>
        <name>thiamine diphosphate</name>
        <dbReference type="ChEBI" id="CHEBI:58937"/>
    </ligand>
</feature>
<feature type="binding site" evidence="1">
    <location>
        <position position="145"/>
    </location>
    <ligand>
        <name>Mg(2+)</name>
        <dbReference type="ChEBI" id="CHEBI:18420"/>
    </ligand>
</feature>
<feature type="binding site" evidence="1">
    <location>
        <begin position="146"/>
        <end position="147"/>
    </location>
    <ligand>
        <name>thiamine diphosphate</name>
        <dbReference type="ChEBI" id="CHEBI:58937"/>
    </ligand>
</feature>
<feature type="binding site" evidence="1">
    <location>
        <position position="175"/>
    </location>
    <ligand>
        <name>Mg(2+)</name>
        <dbReference type="ChEBI" id="CHEBI:18420"/>
    </ligand>
</feature>
<feature type="binding site" evidence="1">
    <location>
        <position position="175"/>
    </location>
    <ligand>
        <name>thiamine diphosphate</name>
        <dbReference type="ChEBI" id="CHEBI:58937"/>
    </ligand>
</feature>
<feature type="binding site" evidence="1">
    <location>
        <position position="286"/>
    </location>
    <ligand>
        <name>thiamine diphosphate</name>
        <dbReference type="ChEBI" id="CHEBI:58937"/>
    </ligand>
</feature>
<feature type="binding site" evidence="1">
    <location>
        <position position="368"/>
    </location>
    <ligand>
        <name>thiamine diphosphate</name>
        <dbReference type="ChEBI" id="CHEBI:58937"/>
    </ligand>
</feature>
<evidence type="ECO:0000255" key="1">
    <source>
        <dbReference type="HAMAP-Rule" id="MF_00315"/>
    </source>
</evidence>
<name>DXS_NOCFA</name>
<sequence>MGVLSRVDTPEDVRRLNVAELRELAEEIREFLVRKVAATGGHLGPNLGVVELTIALHRVFDSPADPLIFDTGHQAYVHKILTGRKDRFDDLRKQGGLSGYPSRAESPHDWVESSHASAALSYADGLAKAFALGGQDRHVVAVVGDGALTGGMCWEALNNIAAAPDRPVVVVVNDNGRSYAPTIGGLADRLTALRTQPAYEHALDAGKRLLKSIPRVGESAYSMVHAVKAGIKDAVSPQELFSDLGLKYVGPVDGHDVVAMESALRRAKDFGGPVVVHAVTQKGRGYEHAENHVADQMHACDPIDPLTGRPLGGAKARGWTSVFSEELIEHARRRSDIVAITAAMPGPTGLSAFGERFPDRMFDVGIAEQHAMASAAGLALGGMHPVVAIYSTFLNRAFDQLLMDVALLKQPVTVVLDRAGITGPDGASHNGMWDLSLLGIIPGIRVAAPRDAATLREELGEALAVTDGPTVLRFPKGSVAEDLTAVERIDGVDVLRAADPESAVRTQRGDVLIVAVGPFARIGLAAAELLAPEGVSVTVVDPRWVLPVSDTVVKLAENYRLVVTLEDSGLHGGIGSTVSARLRSVGLDVPTRDLGVPQQFLDHASRDQVLEQLGLTPTDVARRIAGWLDAR</sequence>
<dbReference type="EC" id="2.2.1.7" evidence="1"/>
<dbReference type="EMBL" id="AP006618">
    <property type="protein sequence ID" value="BAD58589.1"/>
    <property type="molecule type" value="Genomic_DNA"/>
</dbReference>
<dbReference type="RefSeq" id="WP_011210274.1">
    <property type="nucleotide sequence ID" value="NC_006361.1"/>
</dbReference>
<dbReference type="SMR" id="Q5YTA2"/>
<dbReference type="STRING" id="247156.NFA_37410"/>
<dbReference type="GeneID" id="61134434"/>
<dbReference type="KEGG" id="nfa:NFA_37410"/>
<dbReference type="eggNOG" id="COG1154">
    <property type="taxonomic scope" value="Bacteria"/>
</dbReference>
<dbReference type="HOGENOM" id="CLU_009227_1_4_11"/>
<dbReference type="OrthoDB" id="9803371at2"/>
<dbReference type="UniPathway" id="UPA00064">
    <property type="reaction ID" value="UER00091"/>
</dbReference>
<dbReference type="Proteomes" id="UP000006820">
    <property type="component" value="Chromosome"/>
</dbReference>
<dbReference type="GO" id="GO:0005829">
    <property type="term" value="C:cytosol"/>
    <property type="evidence" value="ECO:0007669"/>
    <property type="project" value="TreeGrafter"/>
</dbReference>
<dbReference type="GO" id="GO:0008661">
    <property type="term" value="F:1-deoxy-D-xylulose-5-phosphate synthase activity"/>
    <property type="evidence" value="ECO:0007669"/>
    <property type="project" value="UniProtKB-UniRule"/>
</dbReference>
<dbReference type="GO" id="GO:0000287">
    <property type="term" value="F:magnesium ion binding"/>
    <property type="evidence" value="ECO:0007669"/>
    <property type="project" value="UniProtKB-UniRule"/>
</dbReference>
<dbReference type="GO" id="GO:0030976">
    <property type="term" value="F:thiamine pyrophosphate binding"/>
    <property type="evidence" value="ECO:0007669"/>
    <property type="project" value="UniProtKB-UniRule"/>
</dbReference>
<dbReference type="GO" id="GO:0052865">
    <property type="term" value="P:1-deoxy-D-xylulose 5-phosphate biosynthetic process"/>
    <property type="evidence" value="ECO:0007669"/>
    <property type="project" value="UniProtKB-UniPathway"/>
</dbReference>
<dbReference type="GO" id="GO:0019288">
    <property type="term" value="P:isopentenyl diphosphate biosynthetic process, methylerythritol 4-phosphate pathway"/>
    <property type="evidence" value="ECO:0007669"/>
    <property type="project" value="TreeGrafter"/>
</dbReference>
<dbReference type="GO" id="GO:0016114">
    <property type="term" value="P:terpenoid biosynthetic process"/>
    <property type="evidence" value="ECO:0007669"/>
    <property type="project" value="UniProtKB-UniRule"/>
</dbReference>
<dbReference type="GO" id="GO:0009228">
    <property type="term" value="P:thiamine biosynthetic process"/>
    <property type="evidence" value="ECO:0007669"/>
    <property type="project" value="UniProtKB-UniRule"/>
</dbReference>
<dbReference type="CDD" id="cd02007">
    <property type="entry name" value="TPP_DXS"/>
    <property type="match status" value="1"/>
</dbReference>
<dbReference type="CDD" id="cd07033">
    <property type="entry name" value="TPP_PYR_DXS_TK_like"/>
    <property type="match status" value="1"/>
</dbReference>
<dbReference type="FunFam" id="3.40.50.970:FF:000005">
    <property type="entry name" value="1-deoxy-D-xylulose-5-phosphate synthase"/>
    <property type="match status" value="1"/>
</dbReference>
<dbReference type="Gene3D" id="3.40.50.920">
    <property type="match status" value="1"/>
</dbReference>
<dbReference type="Gene3D" id="3.40.50.970">
    <property type="match status" value="2"/>
</dbReference>
<dbReference type="HAMAP" id="MF_00315">
    <property type="entry name" value="DXP_synth"/>
    <property type="match status" value="1"/>
</dbReference>
<dbReference type="InterPro" id="IPR005477">
    <property type="entry name" value="Dxylulose-5-P_synthase"/>
</dbReference>
<dbReference type="InterPro" id="IPR029061">
    <property type="entry name" value="THDP-binding"/>
</dbReference>
<dbReference type="InterPro" id="IPR009014">
    <property type="entry name" value="Transketo_C/PFOR_II"/>
</dbReference>
<dbReference type="InterPro" id="IPR005475">
    <property type="entry name" value="Transketolase-like_Pyr-bd"/>
</dbReference>
<dbReference type="InterPro" id="IPR020826">
    <property type="entry name" value="Transketolase_BS"/>
</dbReference>
<dbReference type="InterPro" id="IPR033248">
    <property type="entry name" value="Transketolase_C"/>
</dbReference>
<dbReference type="NCBIfam" id="TIGR00204">
    <property type="entry name" value="dxs"/>
    <property type="match status" value="1"/>
</dbReference>
<dbReference type="NCBIfam" id="NF003933">
    <property type="entry name" value="PRK05444.2-2"/>
    <property type="match status" value="1"/>
</dbReference>
<dbReference type="PANTHER" id="PTHR43322">
    <property type="entry name" value="1-D-DEOXYXYLULOSE 5-PHOSPHATE SYNTHASE-RELATED"/>
    <property type="match status" value="1"/>
</dbReference>
<dbReference type="PANTHER" id="PTHR43322:SF5">
    <property type="entry name" value="1-DEOXY-D-XYLULOSE-5-PHOSPHATE SYNTHASE, CHLOROPLASTIC"/>
    <property type="match status" value="1"/>
</dbReference>
<dbReference type="Pfam" id="PF13292">
    <property type="entry name" value="DXP_synthase_N"/>
    <property type="match status" value="1"/>
</dbReference>
<dbReference type="Pfam" id="PF02779">
    <property type="entry name" value="Transket_pyr"/>
    <property type="match status" value="1"/>
</dbReference>
<dbReference type="Pfam" id="PF02780">
    <property type="entry name" value="Transketolase_C"/>
    <property type="match status" value="1"/>
</dbReference>
<dbReference type="SMART" id="SM00861">
    <property type="entry name" value="Transket_pyr"/>
    <property type="match status" value="1"/>
</dbReference>
<dbReference type="SUPFAM" id="SSF52518">
    <property type="entry name" value="Thiamin diphosphate-binding fold (THDP-binding)"/>
    <property type="match status" value="2"/>
</dbReference>
<dbReference type="SUPFAM" id="SSF52922">
    <property type="entry name" value="TK C-terminal domain-like"/>
    <property type="match status" value="1"/>
</dbReference>
<dbReference type="PROSITE" id="PS00802">
    <property type="entry name" value="TRANSKETOLASE_2"/>
    <property type="match status" value="1"/>
</dbReference>
<comment type="function">
    <text evidence="1">Catalyzes the acyloin condensation reaction between C atoms 2 and 3 of pyruvate and glyceraldehyde 3-phosphate to yield 1-deoxy-D-xylulose-5-phosphate (DXP).</text>
</comment>
<comment type="catalytic activity">
    <reaction evidence="1">
        <text>D-glyceraldehyde 3-phosphate + pyruvate + H(+) = 1-deoxy-D-xylulose 5-phosphate + CO2</text>
        <dbReference type="Rhea" id="RHEA:12605"/>
        <dbReference type="ChEBI" id="CHEBI:15361"/>
        <dbReference type="ChEBI" id="CHEBI:15378"/>
        <dbReference type="ChEBI" id="CHEBI:16526"/>
        <dbReference type="ChEBI" id="CHEBI:57792"/>
        <dbReference type="ChEBI" id="CHEBI:59776"/>
        <dbReference type="EC" id="2.2.1.7"/>
    </reaction>
</comment>
<comment type="cofactor">
    <cofactor evidence="1">
        <name>Mg(2+)</name>
        <dbReference type="ChEBI" id="CHEBI:18420"/>
    </cofactor>
    <text evidence="1">Binds 1 Mg(2+) ion per subunit.</text>
</comment>
<comment type="cofactor">
    <cofactor evidence="1">
        <name>thiamine diphosphate</name>
        <dbReference type="ChEBI" id="CHEBI:58937"/>
    </cofactor>
    <text evidence="1">Binds 1 thiamine pyrophosphate per subunit.</text>
</comment>
<comment type="pathway">
    <text evidence="1">Metabolic intermediate biosynthesis; 1-deoxy-D-xylulose 5-phosphate biosynthesis; 1-deoxy-D-xylulose 5-phosphate from D-glyceraldehyde 3-phosphate and pyruvate: step 1/1.</text>
</comment>
<comment type="subunit">
    <text evidence="1">Homodimer.</text>
</comment>
<comment type="similarity">
    <text evidence="1">Belongs to the transketolase family. DXPS subfamily.</text>
</comment>
<organism>
    <name type="scientific">Nocardia farcinica (strain IFM 10152)</name>
    <dbReference type="NCBI Taxonomy" id="247156"/>
    <lineage>
        <taxon>Bacteria</taxon>
        <taxon>Bacillati</taxon>
        <taxon>Actinomycetota</taxon>
        <taxon>Actinomycetes</taxon>
        <taxon>Mycobacteriales</taxon>
        <taxon>Nocardiaceae</taxon>
        <taxon>Nocardia</taxon>
    </lineage>
</organism>